<comment type="subunit">
    <text evidence="1">Interacts with CRISP3.</text>
</comment>
<comment type="subcellular location">
    <subcellularLocation>
        <location evidence="2">Secreted</location>
    </subcellularLocation>
</comment>
<comment type="alternative products">
    <event type="alternative splicing"/>
    <isoform>
        <id>Q9EPH1-1</id>
        <name evidence="6">1</name>
        <sequence type="displayed"/>
    </isoform>
    <isoform>
        <id>Q9EPH1-2</id>
        <name evidence="5">2</name>
        <sequence type="described" ref="VSP_051640 VSP_051641"/>
    </isoform>
</comment>
<comment type="tissue specificity">
    <text evidence="5 6">Isoform 1 is expressed in normal liver. Isoform 2 is expressed in the regenerating liver after partial hepatectomy and at very low levels in the normal lung, brain and testis.</text>
</comment>
<comment type="developmental stage">
    <molecule>Isoform 1</molecule>
    <text evidence="6">Expressed in females at day 35 with higher levels detected at day 56. Not detected in males of any age.</text>
</comment>
<comment type="induction">
    <molecule>Isoform 1</molecule>
    <text evidence="6">Up-regulated by continuous exposure to growth hormone.</text>
</comment>
<comment type="sequence caution" evidence="8">
    <conflict type="erroneous initiation">
        <sequence resource="EMBL-CDS" id="AAF68963"/>
    </conflict>
</comment>
<sequence length="513" mass="56479">MSLLTTVLLLWGFTLGPGNALWLDSGSEPELRAEPQSLLEPWANLTLVCAVDLPTKVFELIMNGWFLSQVRLETPVLSYRFSLGAITSNNSGVYRCRCGVEPPVDIQLPALSKWTMLSNALEVTGKEPLPPPSAHADPVSWITPGGLPVYIMCRVAMRGVTYLLRKEGVDGTQKPDVQHKGTAGFLIYKPGNYSCSYLTHAGGKPSEPSAIVTIKMSATQLPPSLCLMGSYLTIYPQKTHETLACKAPRNAAEFQLRQGERVLNIQGFSPTRDATIYYVNLKELDNQSPFTCRYRMHKYMHVWSEDSKPVELMWSDEKLPAPVLTAEPSSHNLEPGSTVQLRCTAHKAGLRFGLQRQGKPDLVVVQMLNSSGTEAVFELHNISTIDSGNYSCIYMEQAPPFSGSASSEPLELRINGPAPKPRLEALWKGKVPLGHEAIFQCHGHVPRVSMELVREGFKTPFWMASTTSTSAFLKLSFVGPQHTGNYSCRYTALSPFTFESGISDPVEVVVEGS</sequence>
<proteinExistence type="evidence at transcript level"/>
<protein>
    <recommendedName>
        <fullName>Alpha-1B-glycoprotein</fullName>
    </recommendedName>
    <alternativeName>
        <fullName>Alpha-1-B glycoprotein</fullName>
    </alternativeName>
    <alternativeName>
        <fullName>C44</fullName>
    </alternativeName>
    <alternativeName>
        <fullName>Liver regeneration-related protein 1</fullName>
    </alternativeName>
</protein>
<accession>Q9EPH1</accession>
<accession>Q5EBD6</accession>
<accession>Q9JKL2</accession>
<name>A1BG_RAT</name>
<keyword id="KW-0025">Alternative splicing</keyword>
<keyword id="KW-1015">Disulfide bond</keyword>
<keyword id="KW-0325">Glycoprotein</keyword>
<keyword id="KW-0393">Immunoglobulin domain</keyword>
<keyword id="KW-1185">Reference proteome</keyword>
<keyword id="KW-0677">Repeat</keyword>
<keyword id="KW-0964">Secreted</keyword>
<keyword id="KW-0732">Signal</keyword>
<gene>
    <name evidence="11" type="primary">A1bg</name>
</gene>
<evidence type="ECO:0000250" key="1"/>
<evidence type="ECO:0000250" key="2">
    <source>
        <dbReference type="UniProtKB" id="P04217"/>
    </source>
</evidence>
<evidence type="ECO:0000255" key="3"/>
<evidence type="ECO:0000255" key="4">
    <source>
        <dbReference type="PROSITE-ProRule" id="PRU00114"/>
    </source>
</evidence>
<evidence type="ECO:0000269" key="5">
    <source>
    </source>
</evidence>
<evidence type="ECO:0000269" key="6">
    <source>
    </source>
</evidence>
<evidence type="ECO:0000303" key="7">
    <source>
    </source>
</evidence>
<evidence type="ECO:0000305" key="8"/>
<evidence type="ECO:0000312" key="9">
    <source>
        <dbReference type="EMBL" id="AAF68963.1"/>
    </source>
</evidence>
<evidence type="ECO:0000312" key="10">
    <source>
        <dbReference type="EMBL" id="CAC19029.1"/>
    </source>
</evidence>
<evidence type="ECO:0000312" key="11">
    <source>
        <dbReference type="RGD" id="69417"/>
    </source>
</evidence>
<feature type="signal peptide" evidence="3">
    <location>
        <begin position="1"/>
        <end position="20"/>
    </location>
</feature>
<feature type="chain" id="PRO_0000014503" description="Alpha-1B-glycoprotein" evidence="3">
    <location>
        <begin position="21"/>
        <end position="513"/>
    </location>
</feature>
<feature type="domain" description="Ig-like V-type 1" evidence="3">
    <location>
        <begin position="22"/>
        <end position="126"/>
    </location>
</feature>
<feature type="domain" description="Ig-like V-type 2" evidence="3">
    <location>
        <begin position="127"/>
        <end position="219"/>
    </location>
</feature>
<feature type="domain" description="Ig-like V-type 3" evidence="3">
    <location>
        <begin position="220"/>
        <end position="312"/>
    </location>
</feature>
<feature type="domain" description="Ig-like V-type 4" evidence="3">
    <location>
        <begin position="313"/>
        <end position="415"/>
    </location>
</feature>
<feature type="domain" description="Ig-like V-type 5" evidence="3">
    <location>
        <begin position="416"/>
        <end position="513"/>
    </location>
</feature>
<feature type="glycosylation site" description="N-linked (GlcNAc...) asparagine" evidence="3">
    <location>
        <position position="44"/>
    </location>
</feature>
<feature type="glycosylation site" description="N-linked (GlcNAc...) asparagine" evidence="3">
    <location>
        <position position="89"/>
    </location>
</feature>
<feature type="glycosylation site" description="N-linked (GlcNAc...) asparagine" evidence="3">
    <location>
        <position position="192"/>
    </location>
</feature>
<feature type="glycosylation site" description="N-linked (GlcNAc...) asparagine" evidence="3">
    <location>
        <position position="369"/>
    </location>
</feature>
<feature type="glycosylation site" description="N-linked (GlcNAc...) asparagine" evidence="3">
    <location>
        <position position="381"/>
    </location>
</feature>
<feature type="glycosylation site" description="N-linked (GlcNAc...) asparagine" evidence="3">
    <location>
        <position position="389"/>
    </location>
</feature>
<feature type="glycosylation site" description="N-linked (GlcNAc...) asparagine" evidence="3">
    <location>
        <position position="485"/>
    </location>
</feature>
<feature type="disulfide bond" evidence="2 4">
    <location>
        <begin position="49"/>
        <end position="96"/>
    </location>
</feature>
<feature type="disulfide bond" evidence="2 4">
    <location>
        <begin position="153"/>
        <end position="195"/>
    </location>
</feature>
<feature type="disulfide bond" evidence="2 4">
    <location>
        <begin position="245"/>
        <end position="292"/>
    </location>
</feature>
<feature type="disulfide bond" evidence="2 4">
    <location>
        <begin position="343"/>
        <end position="392"/>
    </location>
</feature>
<feature type="disulfide bond" evidence="2 4">
    <location>
        <begin position="441"/>
        <end position="488"/>
    </location>
</feature>
<feature type="splice variant" id="VSP_051640" description="In isoform 2." evidence="7">
    <original>PAPKPRLEALWKGKVPLGHEAIFQCHGHVPRVSMELVREGFKTPFWMASTTSTSAFL</original>
    <variation>ELRRTMTEEGTERYSLRNQGSCAVISQLYLNEVLGFENLEEISLRCETWKSGLFRIL</variation>
    <location>
        <begin position="417"/>
        <end position="473"/>
    </location>
</feature>
<feature type="splice variant" id="VSP_051641" description="In isoform 2." evidence="7">
    <location>
        <begin position="474"/>
        <end position="513"/>
    </location>
</feature>
<feature type="sequence conflict" description="In Ref. 1; CAC19029." evidence="8" ref="1">
    <original>D</original>
    <variation>N</variation>
    <location>
        <position position="24"/>
    </location>
</feature>
<feature type="sequence conflict" description="In Ref. 1; CAC19029." evidence="8" ref="1">
    <original>K</original>
    <variation>E</variation>
    <location>
        <position position="204"/>
    </location>
</feature>
<feature type="sequence conflict" description="In Ref. 3; AAF68963." evidence="8" ref="3">
    <original>T</original>
    <variation>A</variation>
    <location>
        <position position="239"/>
    </location>
</feature>
<feature type="sequence conflict" description="In Ref. 3; AAF68963." evidence="8" ref="3">
    <original>T</original>
    <variation>M</variation>
    <location>
        <position position="242"/>
    </location>
</feature>
<feature type="sequence conflict" description="In Ref. 3; AAF68963." evidence="8" ref="3">
    <original>E</original>
    <variation>K</variation>
    <location>
        <position position="283"/>
    </location>
</feature>
<reference evidence="8 10" key="1">
    <citation type="journal article" date="2001" name="Endocrinology">
        <title>Cloning of a novel growth hormone-regulated rat complementary deoxyribonucleic acid with homology to the human alpha1B-glycoprotein, characterizing a new protein family.</title>
        <authorList>
            <person name="Gardmo C."/>
            <person name="Persson B."/>
            <person name="Mode A."/>
        </authorList>
    </citation>
    <scope>NUCLEOTIDE SEQUENCE [MRNA] (ISOFORM 1)</scope>
    <scope>TISSUE SPECIFICITY</scope>
    <scope>DEVELOPMENTAL STAGE</scope>
    <scope>INDUCTION</scope>
    <source>
        <strain evidence="10">Sprague-Dawley</strain>
        <tissue evidence="10">Liver</tissue>
    </source>
</reference>
<reference key="2">
    <citation type="journal article" date="2004" name="Genome Res.">
        <title>The status, quality, and expansion of the NIH full-length cDNA project: the Mammalian Gene Collection (MGC).</title>
        <authorList>
            <consortium name="The MGC Project Team"/>
        </authorList>
    </citation>
    <scope>NUCLEOTIDE SEQUENCE [LARGE SCALE MRNA] (ISOFORM 1)</scope>
    <source>
        <tissue>Liver</tissue>
    </source>
</reference>
<reference evidence="8 9" key="3">
    <citation type="journal article" date="2000" name="Biochem. Biophys. Res. Commun.">
        <title>Identification and characterization of differentially expressed genes in the early response phase during liver regeneration.</title>
        <authorList>
            <person name="Xu W."/>
            <person name="Wang S."/>
            <person name="Wang G."/>
            <person name="Wei H."/>
            <person name="He F."/>
            <person name="Yang X."/>
        </authorList>
    </citation>
    <scope>NUCLEOTIDE SEQUENCE [MRNA] OF 219-513 (ISOFORM 2)</scope>
    <scope>TISSUE SPECIFICITY</scope>
    <source>
        <strain evidence="5">Wistar</strain>
        <tissue evidence="9">Liver</tissue>
    </source>
</reference>
<organism>
    <name type="scientific">Rattus norvegicus</name>
    <name type="common">Rat</name>
    <dbReference type="NCBI Taxonomy" id="10116"/>
    <lineage>
        <taxon>Eukaryota</taxon>
        <taxon>Metazoa</taxon>
        <taxon>Chordata</taxon>
        <taxon>Craniata</taxon>
        <taxon>Vertebrata</taxon>
        <taxon>Euteleostomi</taxon>
        <taxon>Mammalia</taxon>
        <taxon>Eutheria</taxon>
        <taxon>Euarchontoglires</taxon>
        <taxon>Glires</taxon>
        <taxon>Rodentia</taxon>
        <taxon>Myomorpha</taxon>
        <taxon>Muroidea</taxon>
        <taxon>Muridae</taxon>
        <taxon>Murinae</taxon>
        <taxon>Rattus</taxon>
    </lineage>
</organism>
<dbReference type="EMBL" id="AJ302031">
    <property type="protein sequence ID" value="CAC19029.1"/>
    <property type="molecule type" value="mRNA"/>
</dbReference>
<dbReference type="EMBL" id="BC089771">
    <property type="protein sequence ID" value="AAH89771.1"/>
    <property type="molecule type" value="mRNA"/>
</dbReference>
<dbReference type="EMBL" id="AF236054">
    <property type="protein sequence ID" value="AAF68963.1"/>
    <property type="status" value="ALT_INIT"/>
    <property type="molecule type" value="mRNA"/>
</dbReference>
<dbReference type="RefSeq" id="NP_071594.2">
    <molecule id="Q9EPH1-1"/>
    <property type="nucleotide sequence ID" value="NM_022258.2"/>
</dbReference>
<dbReference type="SMR" id="Q9EPH1"/>
<dbReference type="FunCoup" id="Q9EPH1">
    <property type="interactions" value="31"/>
</dbReference>
<dbReference type="STRING" id="10116.ENSRNOP00000006273"/>
<dbReference type="MEROPS" id="I43.950"/>
<dbReference type="GlyCosmos" id="Q9EPH1">
    <property type="glycosylation" value="7 sites, No reported glycans"/>
</dbReference>
<dbReference type="GlyGen" id="Q9EPH1">
    <property type="glycosylation" value="8 sites"/>
</dbReference>
<dbReference type="PhosphoSitePlus" id="Q9EPH1"/>
<dbReference type="SwissPalm" id="Q9EPH1"/>
<dbReference type="PaxDb" id="10116-ENSRNOP00000006273"/>
<dbReference type="Ensembl" id="ENSRNOT00000006273.7">
    <molecule id="Q9EPH1-1"/>
    <property type="protein sequence ID" value="ENSRNOP00000006273.4"/>
    <property type="gene ID" value="ENSRNOG00000004692.8"/>
</dbReference>
<dbReference type="GeneID" id="140656"/>
<dbReference type="KEGG" id="rno:140656"/>
<dbReference type="UCSC" id="RGD:69417">
    <molecule id="Q9EPH1-1"/>
    <property type="organism name" value="rat"/>
</dbReference>
<dbReference type="AGR" id="RGD:69417"/>
<dbReference type="CTD" id="1"/>
<dbReference type="RGD" id="69417">
    <property type="gene designation" value="A1bg"/>
</dbReference>
<dbReference type="eggNOG" id="ENOG502RYEX">
    <property type="taxonomic scope" value="Eukaryota"/>
</dbReference>
<dbReference type="GeneTree" id="ENSGT01130000278334"/>
<dbReference type="HOGENOM" id="CLU_042929_1_0_1"/>
<dbReference type="InParanoid" id="Q9EPH1"/>
<dbReference type="OMA" id="WMASTTS"/>
<dbReference type="OrthoDB" id="9450204at2759"/>
<dbReference type="PhylomeDB" id="Q9EPH1"/>
<dbReference type="TreeFam" id="TF336644"/>
<dbReference type="Reactome" id="R-RNO-114608">
    <property type="pathway name" value="Platelet degranulation"/>
</dbReference>
<dbReference type="Reactome" id="R-RNO-6798695">
    <property type="pathway name" value="Neutrophil degranulation"/>
</dbReference>
<dbReference type="PRO" id="PR:Q9EPH1"/>
<dbReference type="Proteomes" id="UP000002494">
    <property type="component" value="Chromosome 7"/>
</dbReference>
<dbReference type="Bgee" id="ENSRNOG00000004692">
    <property type="expression patterns" value="Expressed in liver and 4 other cell types or tissues"/>
</dbReference>
<dbReference type="GO" id="GO:0005576">
    <property type="term" value="C:extracellular region"/>
    <property type="evidence" value="ECO:0000250"/>
    <property type="project" value="UniProtKB"/>
</dbReference>
<dbReference type="GO" id="GO:0005886">
    <property type="term" value="C:plasma membrane"/>
    <property type="evidence" value="ECO:0000318"/>
    <property type="project" value="GO_Central"/>
</dbReference>
<dbReference type="GO" id="GO:0060396">
    <property type="term" value="P:growth hormone receptor signaling pathway"/>
    <property type="evidence" value="ECO:0000266"/>
    <property type="project" value="RGD"/>
</dbReference>
<dbReference type="GO" id="GO:0002764">
    <property type="term" value="P:immune response-regulating signaling pathway"/>
    <property type="evidence" value="ECO:0000318"/>
    <property type="project" value="GO_Central"/>
</dbReference>
<dbReference type="FunFam" id="2.60.40.10:FF:000033">
    <property type="entry name" value="Killer cell immunoglobulin-like receptor"/>
    <property type="match status" value="2"/>
</dbReference>
<dbReference type="FunFam" id="2.60.40.10:FF:000049">
    <property type="entry name" value="Leukocyte immunoglobulin-like receptor subfamily B member 1"/>
    <property type="match status" value="1"/>
</dbReference>
<dbReference type="Gene3D" id="2.60.40.10">
    <property type="entry name" value="Immunoglobulins"/>
    <property type="match status" value="5"/>
</dbReference>
<dbReference type="InterPro" id="IPR016332">
    <property type="entry name" value="A1B_glyco/leuk_Ig-like_rcpt"/>
</dbReference>
<dbReference type="InterPro" id="IPR007110">
    <property type="entry name" value="Ig-like_dom"/>
</dbReference>
<dbReference type="InterPro" id="IPR036179">
    <property type="entry name" value="Ig-like_dom_sf"/>
</dbReference>
<dbReference type="InterPro" id="IPR013783">
    <property type="entry name" value="Ig-like_fold"/>
</dbReference>
<dbReference type="InterPro" id="IPR050412">
    <property type="entry name" value="Ig-like_Receptors_ImmuneReg"/>
</dbReference>
<dbReference type="InterPro" id="IPR003599">
    <property type="entry name" value="Ig_sub"/>
</dbReference>
<dbReference type="PANTHER" id="PTHR11738:SF184">
    <property type="entry name" value="ALPHA-1B-GLYCOPROTEIN"/>
    <property type="match status" value="1"/>
</dbReference>
<dbReference type="PANTHER" id="PTHR11738">
    <property type="entry name" value="MHC CLASS I NK CELL RECEPTOR"/>
    <property type="match status" value="1"/>
</dbReference>
<dbReference type="Pfam" id="PF13895">
    <property type="entry name" value="Ig_2"/>
    <property type="match status" value="1"/>
</dbReference>
<dbReference type="Pfam" id="PF13927">
    <property type="entry name" value="Ig_3"/>
    <property type="match status" value="1"/>
</dbReference>
<dbReference type="PIRSF" id="PIRSF001979">
    <property type="entry name" value="Alpha_1B_glycoprot_prd"/>
    <property type="match status" value="1"/>
</dbReference>
<dbReference type="SMART" id="SM00409">
    <property type="entry name" value="IG"/>
    <property type="match status" value="3"/>
</dbReference>
<dbReference type="SUPFAM" id="SSF48726">
    <property type="entry name" value="Immunoglobulin"/>
    <property type="match status" value="5"/>
</dbReference>
<dbReference type="PROSITE" id="PS50835">
    <property type="entry name" value="IG_LIKE"/>
    <property type="match status" value="1"/>
</dbReference>